<organism>
    <name type="scientific">Burkholderia cenocepacia (strain ATCC BAA-245 / DSM 16553 / LMG 16656 / NCTC 13227 / J2315 / CF5610)</name>
    <name type="common">Burkholderia cepacia (strain J2315)</name>
    <dbReference type="NCBI Taxonomy" id="216591"/>
    <lineage>
        <taxon>Bacteria</taxon>
        <taxon>Pseudomonadati</taxon>
        <taxon>Pseudomonadota</taxon>
        <taxon>Betaproteobacteria</taxon>
        <taxon>Burkholderiales</taxon>
        <taxon>Burkholderiaceae</taxon>
        <taxon>Burkholderia</taxon>
        <taxon>Burkholderia cepacia complex</taxon>
    </lineage>
</organism>
<gene>
    <name evidence="1" type="primary">rpsO</name>
    <name type="ordered locus">BceJ2315_23090</name>
    <name type="ORF">BCAL2349</name>
</gene>
<proteinExistence type="inferred from homology"/>
<comment type="function">
    <text evidence="1">One of the primary rRNA binding proteins, it binds directly to 16S rRNA where it helps nucleate assembly of the platform of the 30S subunit by binding and bridging several RNA helices of the 16S rRNA.</text>
</comment>
<comment type="function">
    <text evidence="1">Forms an intersubunit bridge (bridge B4) with the 23S rRNA of the 50S subunit in the ribosome.</text>
</comment>
<comment type="subunit">
    <text evidence="1">Part of the 30S ribosomal subunit. Forms a bridge to the 50S subunit in the 70S ribosome, contacting the 23S rRNA.</text>
</comment>
<comment type="similarity">
    <text evidence="1">Belongs to the universal ribosomal protein uS15 family.</text>
</comment>
<dbReference type="EMBL" id="AM747720">
    <property type="protein sequence ID" value="CAR52650.1"/>
    <property type="molecule type" value="Genomic_DNA"/>
</dbReference>
<dbReference type="RefSeq" id="WP_006398792.1">
    <property type="nucleotide sequence ID" value="NC_011000.1"/>
</dbReference>
<dbReference type="SMR" id="B4E5M7"/>
<dbReference type="GeneID" id="98107299"/>
<dbReference type="KEGG" id="bcj:BCAL2349"/>
<dbReference type="eggNOG" id="COG0184">
    <property type="taxonomic scope" value="Bacteria"/>
</dbReference>
<dbReference type="HOGENOM" id="CLU_148518_0_0_4"/>
<dbReference type="BioCyc" id="BCEN216591:G1G1V-2594-MONOMER"/>
<dbReference type="Proteomes" id="UP000001035">
    <property type="component" value="Chromosome 1"/>
</dbReference>
<dbReference type="GO" id="GO:0022627">
    <property type="term" value="C:cytosolic small ribosomal subunit"/>
    <property type="evidence" value="ECO:0007669"/>
    <property type="project" value="TreeGrafter"/>
</dbReference>
<dbReference type="GO" id="GO:0019843">
    <property type="term" value="F:rRNA binding"/>
    <property type="evidence" value="ECO:0007669"/>
    <property type="project" value="UniProtKB-UniRule"/>
</dbReference>
<dbReference type="GO" id="GO:0003735">
    <property type="term" value="F:structural constituent of ribosome"/>
    <property type="evidence" value="ECO:0007669"/>
    <property type="project" value="InterPro"/>
</dbReference>
<dbReference type="GO" id="GO:0006412">
    <property type="term" value="P:translation"/>
    <property type="evidence" value="ECO:0007669"/>
    <property type="project" value="UniProtKB-UniRule"/>
</dbReference>
<dbReference type="CDD" id="cd00353">
    <property type="entry name" value="Ribosomal_S15p_S13e"/>
    <property type="match status" value="1"/>
</dbReference>
<dbReference type="FunFam" id="1.10.287.10:FF:000002">
    <property type="entry name" value="30S ribosomal protein S15"/>
    <property type="match status" value="1"/>
</dbReference>
<dbReference type="Gene3D" id="6.10.250.3130">
    <property type="match status" value="1"/>
</dbReference>
<dbReference type="Gene3D" id="1.10.287.10">
    <property type="entry name" value="S15/NS1, RNA-binding"/>
    <property type="match status" value="1"/>
</dbReference>
<dbReference type="HAMAP" id="MF_01343_B">
    <property type="entry name" value="Ribosomal_uS15_B"/>
    <property type="match status" value="1"/>
</dbReference>
<dbReference type="InterPro" id="IPR000589">
    <property type="entry name" value="Ribosomal_uS15"/>
</dbReference>
<dbReference type="InterPro" id="IPR005290">
    <property type="entry name" value="Ribosomal_uS15_bac-type"/>
</dbReference>
<dbReference type="InterPro" id="IPR009068">
    <property type="entry name" value="uS15_NS1_RNA-bd_sf"/>
</dbReference>
<dbReference type="NCBIfam" id="TIGR00952">
    <property type="entry name" value="S15_bact"/>
    <property type="match status" value="1"/>
</dbReference>
<dbReference type="PANTHER" id="PTHR23321">
    <property type="entry name" value="RIBOSOMAL PROTEIN S15, BACTERIAL AND ORGANELLAR"/>
    <property type="match status" value="1"/>
</dbReference>
<dbReference type="PANTHER" id="PTHR23321:SF26">
    <property type="entry name" value="SMALL RIBOSOMAL SUBUNIT PROTEIN US15M"/>
    <property type="match status" value="1"/>
</dbReference>
<dbReference type="Pfam" id="PF00312">
    <property type="entry name" value="Ribosomal_S15"/>
    <property type="match status" value="1"/>
</dbReference>
<dbReference type="SMART" id="SM01387">
    <property type="entry name" value="Ribosomal_S15"/>
    <property type="match status" value="1"/>
</dbReference>
<dbReference type="SUPFAM" id="SSF47060">
    <property type="entry name" value="S15/NS1 RNA-binding domain"/>
    <property type="match status" value="1"/>
</dbReference>
<dbReference type="PROSITE" id="PS00362">
    <property type="entry name" value="RIBOSOMAL_S15"/>
    <property type="match status" value="1"/>
</dbReference>
<evidence type="ECO:0000255" key="1">
    <source>
        <dbReference type="HAMAP-Rule" id="MF_01343"/>
    </source>
</evidence>
<evidence type="ECO:0000305" key="2"/>
<keyword id="KW-0687">Ribonucleoprotein</keyword>
<keyword id="KW-0689">Ribosomal protein</keyword>
<keyword id="KW-0694">RNA-binding</keyword>
<keyword id="KW-0699">rRNA-binding</keyword>
<feature type="chain" id="PRO_1000143086" description="Small ribosomal subunit protein uS15">
    <location>
        <begin position="1"/>
        <end position="89"/>
    </location>
</feature>
<accession>B4E5M7</accession>
<sequence length="89" mass="10126">MSVADIKKSEVVAQFARGTNDTGSPEVQVALLTARIVELTGHFKTHAKDHHSRRGLLRMVSRRRKLLDYLKGKDADRYRALIEKLGLRK</sequence>
<reference key="1">
    <citation type="journal article" date="2009" name="J. Bacteriol.">
        <title>The genome of Burkholderia cenocepacia J2315, an epidemic pathogen of cystic fibrosis patients.</title>
        <authorList>
            <person name="Holden M.T."/>
            <person name="Seth-Smith H.M."/>
            <person name="Crossman L.C."/>
            <person name="Sebaihia M."/>
            <person name="Bentley S.D."/>
            <person name="Cerdeno-Tarraga A.M."/>
            <person name="Thomson N.R."/>
            <person name="Bason N."/>
            <person name="Quail M.A."/>
            <person name="Sharp S."/>
            <person name="Cherevach I."/>
            <person name="Churcher C."/>
            <person name="Goodhead I."/>
            <person name="Hauser H."/>
            <person name="Holroyd N."/>
            <person name="Mungall K."/>
            <person name="Scott P."/>
            <person name="Walker D."/>
            <person name="White B."/>
            <person name="Rose H."/>
            <person name="Iversen P."/>
            <person name="Mil-Homens D."/>
            <person name="Rocha E.P."/>
            <person name="Fialho A.M."/>
            <person name="Baldwin A."/>
            <person name="Dowson C."/>
            <person name="Barrell B.G."/>
            <person name="Govan J.R."/>
            <person name="Vandamme P."/>
            <person name="Hart C.A."/>
            <person name="Mahenthiralingam E."/>
            <person name="Parkhill J."/>
        </authorList>
    </citation>
    <scope>NUCLEOTIDE SEQUENCE [LARGE SCALE GENOMIC DNA]</scope>
    <source>
        <strain>ATCC BAA-245 / DSM 16553 / LMG 16656 / NCTC 13227 / J2315 / CF5610</strain>
    </source>
</reference>
<name>RS15_BURCJ</name>
<protein>
    <recommendedName>
        <fullName evidence="1">Small ribosomal subunit protein uS15</fullName>
    </recommendedName>
    <alternativeName>
        <fullName evidence="2">30S ribosomal protein S15</fullName>
    </alternativeName>
</protein>